<gene>
    <name type="primary">SAT1</name>
    <name type="synonym">SAT</name>
</gene>
<accession>Q01612</accession>
<name>SAT1_MESAU</name>
<keyword id="KW-0012">Acyltransferase</keyword>
<keyword id="KW-0963">Cytoplasm</keyword>
<keyword id="KW-1185">Reference proteome</keyword>
<keyword id="KW-0808">Transferase</keyword>
<comment type="function">
    <text evidence="2">Enzyme which catalyzes the acetylation of polyamines. Substrate specificity: norspermidine = spermidine &gt;&gt; spermine &gt; N(1)-acetylspermine. This highly regulated enzyme allows a fine attenuation of the intracellular concentration of polyamines. Also involved in the regulation of polyamine transport out of cells. Also acts on 1,3-diaminopropane and 1,5-diaminopentane.</text>
</comment>
<comment type="catalytic activity">
    <reaction evidence="2">
        <text>an alkane-alpha,omega-diamine + acetyl-CoA = an N-acetylalkane-alpha,omega-diamine + CoA + H(+)</text>
        <dbReference type="Rhea" id="RHEA:11116"/>
        <dbReference type="Rhea" id="RHEA-COMP:9766"/>
        <dbReference type="Rhea" id="RHEA-COMP:9767"/>
        <dbReference type="ChEBI" id="CHEBI:15378"/>
        <dbReference type="ChEBI" id="CHEBI:57287"/>
        <dbReference type="ChEBI" id="CHEBI:57288"/>
        <dbReference type="ChEBI" id="CHEBI:70977"/>
        <dbReference type="ChEBI" id="CHEBI:70988"/>
        <dbReference type="EC" id="2.3.1.57"/>
    </reaction>
    <physiologicalReaction direction="left-to-right" evidence="2">
        <dbReference type="Rhea" id="RHEA:11117"/>
    </physiologicalReaction>
</comment>
<comment type="catalytic activity">
    <reaction evidence="2">
        <text>spermidine + acetyl-CoA = N(1)-acetylspermidine + CoA + H(+)</text>
        <dbReference type="Rhea" id="RHEA:28150"/>
        <dbReference type="ChEBI" id="CHEBI:15378"/>
        <dbReference type="ChEBI" id="CHEBI:57287"/>
        <dbReference type="ChEBI" id="CHEBI:57288"/>
        <dbReference type="ChEBI" id="CHEBI:57834"/>
        <dbReference type="ChEBI" id="CHEBI:58324"/>
        <dbReference type="EC" id="2.3.1.57"/>
    </reaction>
    <physiologicalReaction direction="left-to-right" evidence="2">
        <dbReference type="Rhea" id="RHEA:28151"/>
    </physiologicalReaction>
</comment>
<comment type="catalytic activity">
    <reaction evidence="2">
        <text>spermine + acetyl-CoA = N(1)-acetylspermine + CoA + H(+)</text>
        <dbReference type="Rhea" id="RHEA:33099"/>
        <dbReference type="ChEBI" id="CHEBI:15378"/>
        <dbReference type="ChEBI" id="CHEBI:45725"/>
        <dbReference type="ChEBI" id="CHEBI:57287"/>
        <dbReference type="ChEBI" id="CHEBI:57288"/>
        <dbReference type="ChEBI" id="CHEBI:58101"/>
        <dbReference type="EC" id="2.3.1.57"/>
    </reaction>
    <physiologicalReaction direction="left-to-right" evidence="2">
        <dbReference type="Rhea" id="RHEA:33100"/>
    </physiologicalReaction>
</comment>
<comment type="pathway">
    <text evidence="2">Amine and polyamine degradation; putrescine degradation; N-acetylputrescine from putrescine: step 1/1.</text>
</comment>
<comment type="subunit">
    <text evidence="2">Homodimer.</text>
</comment>
<comment type="subcellular location">
    <subcellularLocation>
        <location evidence="2">Cytoplasm</location>
        <location evidence="2">Cytosol</location>
    </subcellularLocation>
</comment>
<comment type="similarity">
    <text evidence="5">Belongs to the acetyltransferase family.</text>
</comment>
<sequence length="171" mass="20043">MAKFKIRPATASDCSDILRLIKELAKYEYMEDQVMLTEKDLLEDGFGEHPFYHCLIAEVPKEHWTPEGHSIVGFAMYYFTYDPWIGKLLYLEDFFVMSDYRGFGIGSEILKNLSQVAMKCRCSSMHFLVAEWNEPSINFYKRRAASDLSSEEGWRLFKIDKEYLLKMAAEE</sequence>
<feature type="chain" id="PRO_0000074592" description="Diamine acetyltransferase 1">
    <location>
        <begin position="1"/>
        <end position="171"/>
    </location>
</feature>
<feature type="domain" description="N-acetyltransferase" evidence="3">
    <location>
        <begin position="4"/>
        <end position="171"/>
    </location>
</feature>
<feature type="active site" description="Proton donor" evidence="1">
    <location>
        <position position="140"/>
    </location>
</feature>
<feature type="binding site" evidence="2">
    <location>
        <begin position="27"/>
        <end position="28"/>
    </location>
    <ligand>
        <name>substrate</name>
    </ligand>
</feature>
<feature type="binding site" evidence="2">
    <location>
        <position position="92"/>
    </location>
    <ligand>
        <name>substrate</name>
    </ligand>
</feature>
<feature type="binding site" evidence="2">
    <location>
        <begin position="94"/>
        <end position="96"/>
    </location>
    <ligand>
        <name>acetyl-CoA</name>
        <dbReference type="ChEBI" id="CHEBI:57288"/>
    </ligand>
</feature>
<feature type="binding site" evidence="2">
    <location>
        <begin position="102"/>
        <end position="107"/>
    </location>
    <ligand>
        <name>acetyl-CoA</name>
        <dbReference type="ChEBI" id="CHEBI:57288"/>
    </ligand>
</feature>
<feature type="binding site" evidence="2">
    <location>
        <begin position="126"/>
        <end position="128"/>
    </location>
    <ligand>
        <name>substrate</name>
    </ligand>
</feature>
<feature type="binding site" evidence="2">
    <location>
        <begin position="133"/>
        <end position="136"/>
    </location>
    <ligand>
        <name>acetyl-CoA</name>
        <dbReference type="ChEBI" id="CHEBI:57288"/>
    </ligand>
</feature>
<feature type="binding site" evidence="2">
    <location>
        <begin position="140"/>
        <end position="143"/>
    </location>
    <ligand>
        <name>acetyl-CoA</name>
        <dbReference type="ChEBI" id="CHEBI:57288"/>
    </ligand>
</feature>
<feature type="binding site" evidence="2">
    <location>
        <position position="152"/>
    </location>
    <ligand>
        <name>substrate</name>
    </ligand>
</feature>
<evidence type="ECO:0000250" key="1">
    <source>
        <dbReference type="UniProtKB" id="P0A951"/>
    </source>
</evidence>
<evidence type="ECO:0000250" key="2">
    <source>
        <dbReference type="UniProtKB" id="P21673"/>
    </source>
</evidence>
<evidence type="ECO:0000255" key="3">
    <source>
        <dbReference type="PROSITE-ProRule" id="PRU00532"/>
    </source>
</evidence>
<evidence type="ECO:0000303" key="4">
    <source>
    </source>
</evidence>
<evidence type="ECO:0000305" key="5"/>
<reference key="1">
    <citation type="journal article" date="1992" name="Biochim. Biophys. Acta">
        <title>Nucleotide sequence of hamster spermidine/spermine-N1-acetyltransferase cDNA.</title>
        <authorList>
            <person name="Pegg A.E."/>
            <person name="Stanley B.A."/>
            <person name="Wiest L."/>
            <person name="Casero R.A. Jr."/>
        </authorList>
    </citation>
    <scope>NUCLEOTIDE SEQUENCE [MRNA]</scope>
    <source>
        <tissue>Liver</tissue>
    </source>
</reference>
<proteinExistence type="evidence at transcript level"/>
<dbReference type="EC" id="2.3.1.57" evidence="2"/>
<dbReference type="EMBL" id="Z14316">
    <property type="protein sequence ID" value="CAA78678.1"/>
    <property type="molecule type" value="mRNA"/>
</dbReference>
<dbReference type="PIR" id="S27157">
    <property type="entry name" value="S27157"/>
</dbReference>
<dbReference type="RefSeq" id="NP_001268520.1">
    <property type="nucleotide sequence ID" value="NM_001281591.1"/>
</dbReference>
<dbReference type="SMR" id="Q01612"/>
<dbReference type="STRING" id="10036.ENSMAUP00000021723"/>
<dbReference type="GeneID" id="101832296"/>
<dbReference type="KEGG" id="maua:101832296"/>
<dbReference type="CTD" id="6303"/>
<dbReference type="eggNOG" id="KOG3216">
    <property type="taxonomic scope" value="Eukaryota"/>
</dbReference>
<dbReference type="OrthoDB" id="7305308at2759"/>
<dbReference type="UniPathway" id="UPA00188">
    <property type="reaction ID" value="UER00363"/>
</dbReference>
<dbReference type="Proteomes" id="UP000189706">
    <property type="component" value="Unplaced"/>
</dbReference>
<dbReference type="GO" id="GO:0005829">
    <property type="term" value="C:cytosol"/>
    <property type="evidence" value="ECO:0007669"/>
    <property type="project" value="UniProtKB-SubCell"/>
</dbReference>
<dbReference type="GO" id="GO:0004145">
    <property type="term" value="F:diamine N-acetyltransferase activity"/>
    <property type="evidence" value="ECO:0000250"/>
    <property type="project" value="UniProtKB"/>
</dbReference>
<dbReference type="GO" id="GO:0008080">
    <property type="term" value="F:N-acetyltransferase activity"/>
    <property type="evidence" value="ECO:0000250"/>
    <property type="project" value="UniProtKB"/>
</dbReference>
<dbReference type="GO" id="GO:0019809">
    <property type="term" value="F:spermidine binding"/>
    <property type="evidence" value="ECO:0007669"/>
    <property type="project" value="TreeGrafter"/>
</dbReference>
<dbReference type="GO" id="GO:0006596">
    <property type="term" value="P:polyamine biosynthetic process"/>
    <property type="evidence" value="ECO:0000250"/>
    <property type="project" value="UniProtKB"/>
</dbReference>
<dbReference type="GO" id="GO:0009447">
    <property type="term" value="P:putrescine catabolic process"/>
    <property type="evidence" value="ECO:0007669"/>
    <property type="project" value="UniProtKB-UniPathway"/>
</dbReference>
<dbReference type="GO" id="GO:0032918">
    <property type="term" value="P:spermidine acetylation"/>
    <property type="evidence" value="ECO:0000250"/>
    <property type="project" value="UniProtKB"/>
</dbReference>
<dbReference type="CDD" id="cd04301">
    <property type="entry name" value="NAT_SF"/>
    <property type="match status" value="1"/>
</dbReference>
<dbReference type="FunFam" id="3.40.630.30:FF:000011">
    <property type="entry name" value="Diamine acetyltransferase 1"/>
    <property type="match status" value="1"/>
</dbReference>
<dbReference type="Gene3D" id="3.40.630.30">
    <property type="match status" value="1"/>
</dbReference>
<dbReference type="InterPro" id="IPR016181">
    <property type="entry name" value="Acyl_CoA_acyltransferase"/>
</dbReference>
<dbReference type="InterPro" id="IPR051016">
    <property type="entry name" value="Diverse_Substrate_AcTransf"/>
</dbReference>
<dbReference type="InterPro" id="IPR000182">
    <property type="entry name" value="GNAT_dom"/>
</dbReference>
<dbReference type="PANTHER" id="PTHR10545:SF36">
    <property type="entry name" value="DIAMINE ACETYLTRANSFERASE 1"/>
    <property type="match status" value="1"/>
</dbReference>
<dbReference type="PANTHER" id="PTHR10545">
    <property type="entry name" value="DIAMINE N-ACETYLTRANSFERASE"/>
    <property type="match status" value="1"/>
</dbReference>
<dbReference type="Pfam" id="PF00583">
    <property type="entry name" value="Acetyltransf_1"/>
    <property type="match status" value="1"/>
</dbReference>
<dbReference type="SUPFAM" id="SSF55729">
    <property type="entry name" value="Acyl-CoA N-acyltransferases (Nat)"/>
    <property type="match status" value="1"/>
</dbReference>
<dbReference type="PROSITE" id="PS51186">
    <property type="entry name" value="GNAT"/>
    <property type="match status" value="1"/>
</dbReference>
<organism>
    <name type="scientific">Mesocricetus auratus</name>
    <name type="common">Golden hamster</name>
    <dbReference type="NCBI Taxonomy" id="10036"/>
    <lineage>
        <taxon>Eukaryota</taxon>
        <taxon>Metazoa</taxon>
        <taxon>Chordata</taxon>
        <taxon>Craniata</taxon>
        <taxon>Vertebrata</taxon>
        <taxon>Euteleostomi</taxon>
        <taxon>Mammalia</taxon>
        <taxon>Eutheria</taxon>
        <taxon>Euarchontoglires</taxon>
        <taxon>Glires</taxon>
        <taxon>Rodentia</taxon>
        <taxon>Myomorpha</taxon>
        <taxon>Muroidea</taxon>
        <taxon>Cricetidae</taxon>
        <taxon>Cricetinae</taxon>
        <taxon>Mesocricetus</taxon>
    </lineage>
</organism>
<protein>
    <recommendedName>
        <fullName>Diamine acetyltransferase 1</fullName>
        <ecNumber evidence="2">2.3.1.57</ecNumber>
    </recommendedName>
    <alternativeName>
        <fullName>Polyamine N-acetyltransferase 1</fullName>
    </alternativeName>
    <alternativeName>
        <fullName>Putrescine acetyltransferase</fullName>
    </alternativeName>
    <alternativeName>
        <fullName evidence="4">Spermidine/spermine N(1)-acetyltransferase 1</fullName>
        <shortName evidence="4">SSAT</shortName>
        <shortName>SSAT-1</shortName>
    </alternativeName>
</protein>